<keyword id="KW-1003">Cell membrane</keyword>
<keyword id="KW-0472">Membrane</keyword>
<keyword id="KW-1185">Reference proteome</keyword>
<keyword id="KW-0677">Repeat</keyword>
<keyword id="KW-0812">Transmembrane</keyword>
<keyword id="KW-1133">Transmembrane helix</keyword>
<keyword id="KW-0813">Transport</keyword>
<name>Y1681_ZYMMO</name>
<evidence type="ECO:0000255" key="1"/>
<evidence type="ECO:0000255" key="2">
    <source>
        <dbReference type="PROSITE-ProRule" id="PRU00544"/>
    </source>
</evidence>
<evidence type="ECO:0000305" key="3"/>
<accession>Q5NLV5</accession>
<reference key="1">
    <citation type="journal article" date="2005" name="Nat. Biotechnol.">
        <title>The genome sequence of the ethanologenic bacterium Zymomonas mobilis ZM4.</title>
        <authorList>
            <person name="Seo J.-S."/>
            <person name="Chong H."/>
            <person name="Park H.S."/>
            <person name="Yoon K.-O."/>
            <person name="Jung C."/>
            <person name="Kim J.J."/>
            <person name="Hong J.H."/>
            <person name="Kim H."/>
            <person name="Kim J.-H."/>
            <person name="Kil J.-I."/>
            <person name="Park C.J."/>
            <person name="Oh H.-M."/>
            <person name="Lee J.-S."/>
            <person name="Jin S.-J."/>
            <person name="Um H.-W."/>
            <person name="Lee H.-J."/>
            <person name="Oh S.-J."/>
            <person name="Kim J.Y."/>
            <person name="Kang H.L."/>
            <person name="Lee S.Y."/>
            <person name="Lee K.J."/>
            <person name="Kang H.S."/>
        </authorList>
    </citation>
    <scope>NUCLEOTIDE SEQUENCE [LARGE SCALE GENOMIC DNA]</scope>
    <source>
        <strain>ATCC 31821 / ZM4 / CP4</strain>
    </source>
</reference>
<protein>
    <recommendedName>
        <fullName>Uncharacterized transporter ZMO1681</fullName>
    </recommendedName>
</protein>
<comment type="subcellular location">
    <subcellularLocation>
        <location evidence="3">Cell membrane</location>
        <topology evidence="3">Multi-pass membrane protein</topology>
    </subcellularLocation>
</comment>
<comment type="similarity">
    <text evidence="3">Belongs to the AAE transporter (TC 2.A.81) family.</text>
</comment>
<proteinExistence type="inferred from homology"/>
<dbReference type="EMBL" id="AE008692">
    <property type="protein sequence ID" value="AAV90305.2"/>
    <property type="molecule type" value="Genomic_DNA"/>
</dbReference>
<dbReference type="SMR" id="Q5NLV5"/>
<dbReference type="STRING" id="264203.ZMO1681"/>
<dbReference type="KEGG" id="zmo:ZMO1681"/>
<dbReference type="eggNOG" id="COG2985">
    <property type="taxonomic scope" value="Bacteria"/>
</dbReference>
<dbReference type="HOGENOM" id="CLU_035023_2_2_5"/>
<dbReference type="Proteomes" id="UP000001173">
    <property type="component" value="Chromosome"/>
</dbReference>
<dbReference type="GO" id="GO:0005886">
    <property type="term" value="C:plasma membrane"/>
    <property type="evidence" value="ECO:0007669"/>
    <property type="project" value="UniProtKB-SubCell"/>
</dbReference>
<dbReference type="GO" id="GO:0008324">
    <property type="term" value="F:monoatomic cation transmembrane transporter activity"/>
    <property type="evidence" value="ECO:0007669"/>
    <property type="project" value="InterPro"/>
</dbReference>
<dbReference type="GO" id="GO:0006813">
    <property type="term" value="P:potassium ion transport"/>
    <property type="evidence" value="ECO:0007669"/>
    <property type="project" value="InterPro"/>
</dbReference>
<dbReference type="Gene3D" id="3.30.70.1450">
    <property type="entry name" value="Regulator of K+ conductance, C-terminal domain"/>
    <property type="match status" value="1"/>
</dbReference>
<dbReference type="InterPro" id="IPR050144">
    <property type="entry name" value="AAE_transporter"/>
</dbReference>
<dbReference type="InterPro" id="IPR022457">
    <property type="entry name" value="Asp_Ala_antiprt"/>
</dbReference>
<dbReference type="InterPro" id="IPR006037">
    <property type="entry name" value="RCK_C"/>
</dbReference>
<dbReference type="InterPro" id="IPR036721">
    <property type="entry name" value="RCK_C_sf"/>
</dbReference>
<dbReference type="InterPro" id="IPR006512">
    <property type="entry name" value="YidE_YbjL"/>
</dbReference>
<dbReference type="NCBIfam" id="TIGR03802">
    <property type="entry name" value="Asp_Ala_antiprt"/>
    <property type="match status" value="1"/>
</dbReference>
<dbReference type="PANTHER" id="PTHR30445:SF9">
    <property type="match status" value="1"/>
</dbReference>
<dbReference type="PANTHER" id="PTHR30445">
    <property type="entry name" value="K(+)_H(+) ANTIPORTER SUBUNIT KHTT"/>
    <property type="match status" value="1"/>
</dbReference>
<dbReference type="Pfam" id="PF06826">
    <property type="entry name" value="Asp-Al_Ex"/>
    <property type="match status" value="2"/>
</dbReference>
<dbReference type="Pfam" id="PF02080">
    <property type="entry name" value="TrkA_C"/>
    <property type="match status" value="1"/>
</dbReference>
<dbReference type="SUPFAM" id="SSF116726">
    <property type="entry name" value="TrkA C-terminal domain-like"/>
    <property type="match status" value="1"/>
</dbReference>
<dbReference type="PROSITE" id="PS51202">
    <property type="entry name" value="RCK_C"/>
    <property type="match status" value="2"/>
</dbReference>
<sequence>MVILEFLQTLLRNNPEIALFLAIAIGYWIGKFRFGSLQIGGVAGSLLAAVLISQIGIHIDSGLKTVLFALFIYAVGFQSGPQFFKSLGRQSLREVLMAFVLAISGLFTVLAVARMFHLDKGLAAGVAAGGLTQSAIIGTASSALEKLGLPLAQTQMLQGHVAVGYAVTYIFGSLAPIIICVNILPWLMKRGLREDALTAEAEQMQGMAVYGDGERPALSEFVSRVYQVKKAGQSVQQIESDHVTVEQIRRQKNLVAVTQDSTVEAGDLLLLFGHRADVISTGELLGEEIKQPPHDMDVVIVRHDVLLTNKAFVGKSVAECSQILSQVARHGVYFLGLKRGDKTLPLTSDLHILSGDIVTLYGTRQDVDRVAKELGSLLTRSLKTDLVFHGVGLVVGLLIGLIVVRLGSIPLTLGSGGGALLSGLLFGWYQNRHSKSGNMPMAASTLLVDFGLSGFVAVTGLQTGQQAVTTIMQQGITLFMLGVVVSIVPLIITMLFGRYVLQYKNTAVFAGALAGSRSANPALGEILNKAGNAVPTTSFAITYAIANVLLTLLGPLVVAFS</sequence>
<gene>
    <name type="ordered locus">ZMO1681</name>
</gene>
<organism>
    <name type="scientific">Zymomonas mobilis subsp. mobilis (strain ATCC 31821 / ZM4 / CP4)</name>
    <dbReference type="NCBI Taxonomy" id="264203"/>
    <lineage>
        <taxon>Bacteria</taxon>
        <taxon>Pseudomonadati</taxon>
        <taxon>Pseudomonadota</taxon>
        <taxon>Alphaproteobacteria</taxon>
        <taxon>Sphingomonadales</taxon>
        <taxon>Zymomonadaceae</taxon>
        <taxon>Zymomonas</taxon>
    </lineage>
</organism>
<feature type="chain" id="PRO_0000208781" description="Uncharacterized transporter ZMO1681">
    <location>
        <begin position="1"/>
        <end position="561"/>
    </location>
</feature>
<feature type="transmembrane region" description="Helical" evidence="1">
    <location>
        <begin position="10"/>
        <end position="29"/>
    </location>
</feature>
<feature type="transmembrane region" description="Helical" evidence="1">
    <location>
        <begin position="34"/>
        <end position="56"/>
    </location>
</feature>
<feature type="transmembrane region" description="Helical" evidence="1">
    <location>
        <begin position="63"/>
        <end position="80"/>
    </location>
</feature>
<feature type="transmembrane region" description="Helical" evidence="1">
    <location>
        <begin position="95"/>
        <end position="117"/>
    </location>
</feature>
<feature type="transmembrane region" description="Helical" evidence="1">
    <location>
        <begin position="122"/>
        <end position="144"/>
    </location>
</feature>
<feature type="transmembrane region" description="Helical" evidence="1">
    <location>
        <begin position="164"/>
        <end position="186"/>
    </location>
</feature>
<feature type="transmembrane region" description="Helical" evidence="1">
    <location>
        <begin position="386"/>
        <end position="403"/>
    </location>
</feature>
<feature type="transmembrane region" description="Helical" evidence="1">
    <location>
        <begin position="407"/>
        <end position="429"/>
    </location>
</feature>
<feature type="transmembrane region" description="Helical" evidence="1">
    <location>
        <begin position="442"/>
        <end position="464"/>
    </location>
</feature>
<feature type="transmembrane region" description="Helical" evidence="1">
    <location>
        <begin position="479"/>
        <end position="501"/>
    </location>
</feature>
<feature type="transmembrane region" description="Helical" evidence="1">
    <location>
        <begin position="538"/>
        <end position="560"/>
    </location>
</feature>
<feature type="domain" description="RCK C-terminal 1" evidence="2">
    <location>
        <begin position="205"/>
        <end position="287"/>
    </location>
</feature>
<feature type="domain" description="RCK C-terminal 2" evidence="2">
    <location>
        <begin position="294"/>
        <end position="376"/>
    </location>
</feature>